<reference key="1">
    <citation type="submission" date="2000-06" db="EMBL/GenBank/DDBJ databases">
        <title>Cloning, sequencing and analysis of dnaK-operon from Acholeplasma laidlawii.</title>
        <authorList>
            <person name="Usoskin D.G."/>
            <person name="Vonski M.S."/>
            <person name="Drapchinskaya N.L."/>
            <person name="Borchsenius S.N."/>
        </authorList>
    </citation>
    <scope>NUCLEOTIDE SEQUENCE [GENOMIC DNA]</scope>
    <source>
        <strain>ATCC 23206 / DSM 23060 / NBRC 14400 / NCTC 10116 / PG-8</strain>
    </source>
</reference>
<sequence>MNMQILWIIIAIICSYLIGAIPFGYIIPKLFKGIDIREHGSKNVGSTNVLRVLGAKYGIPTFLLDCFKGALPIIIIRYMLGMPELFLISDTYDISIVFGAAAAIGHIKSIYIGFKGGKAVATGVGAVIAINPIIGLSGIGLFFIVAFSTKYVSIGSVVASFSVAVMMWIGVLIKEIWIPVPNLTISYESQIINLVAISLIVLLIIYMHKKNFIRLMNGTENKIGQKKIQNITK</sequence>
<organism>
    <name type="scientific">Acholeplasma laidlawii</name>
    <dbReference type="NCBI Taxonomy" id="2148"/>
    <lineage>
        <taxon>Bacteria</taxon>
        <taxon>Bacillati</taxon>
        <taxon>Mycoplasmatota</taxon>
        <taxon>Mollicutes</taxon>
        <taxon>Acholeplasmatales</taxon>
        <taxon>Acholeplasmataceae</taxon>
        <taxon>Acholeplasma</taxon>
    </lineage>
</organism>
<feature type="chain" id="PRO_0000188308" description="Glycerol-3-phosphate acyltransferase">
    <location>
        <begin position="1"/>
        <end position="233"/>
    </location>
</feature>
<feature type="transmembrane region" description="Helical" evidence="1">
    <location>
        <begin position="7"/>
        <end position="27"/>
    </location>
</feature>
<feature type="transmembrane region" description="Helical" evidence="1">
    <location>
        <begin position="94"/>
        <end position="114"/>
    </location>
</feature>
<feature type="transmembrane region" description="Helical" evidence="1">
    <location>
        <begin position="127"/>
        <end position="147"/>
    </location>
</feature>
<feature type="transmembrane region" description="Helical" evidence="1">
    <location>
        <begin position="153"/>
        <end position="173"/>
    </location>
</feature>
<feature type="transmembrane region" description="Helical" evidence="1">
    <location>
        <begin position="185"/>
        <end position="205"/>
    </location>
</feature>
<comment type="function">
    <text evidence="1">Catalyzes the transfer of an acyl group from acyl-phosphate (acyl-PO(4)) to glycerol-3-phosphate (G3P) to form lysophosphatidic acid (LPA). This enzyme utilizes acyl-phosphate as fatty acyl donor, but not acyl-CoA or acyl-ACP.</text>
</comment>
<comment type="catalytic activity">
    <reaction evidence="1">
        <text>an acyl phosphate + sn-glycerol 3-phosphate = a 1-acyl-sn-glycero-3-phosphate + phosphate</text>
        <dbReference type="Rhea" id="RHEA:34075"/>
        <dbReference type="ChEBI" id="CHEBI:43474"/>
        <dbReference type="ChEBI" id="CHEBI:57597"/>
        <dbReference type="ChEBI" id="CHEBI:57970"/>
        <dbReference type="ChEBI" id="CHEBI:59918"/>
        <dbReference type="EC" id="2.3.1.275"/>
    </reaction>
</comment>
<comment type="pathway">
    <text evidence="1">Lipid metabolism; phospholipid metabolism.</text>
</comment>
<comment type="subunit">
    <text evidence="1">Probably interacts with PlsX.</text>
</comment>
<comment type="subcellular location">
    <subcellularLocation>
        <location evidence="1">Cell membrane</location>
        <topology evidence="1">Multi-pass membrane protein</topology>
    </subcellularLocation>
</comment>
<comment type="similarity">
    <text evidence="1">Belongs to the PlsY family.</text>
</comment>
<dbReference type="EC" id="2.3.1.275" evidence="1"/>
<dbReference type="EMBL" id="AF281816">
    <property type="protein sequence ID" value="AAM43825.1"/>
    <property type="molecule type" value="Genomic_DNA"/>
</dbReference>
<dbReference type="RefSeq" id="WP_012242496.1">
    <property type="nucleotide sequence ID" value="NZ_QRDS01000001.1"/>
</dbReference>
<dbReference type="SMR" id="Q8L3A1"/>
<dbReference type="OMA" id="WWSHRAN"/>
<dbReference type="UniPathway" id="UPA00085"/>
<dbReference type="GO" id="GO:0005886">
    <property type="term" value="C:plasma membrane"/>
    <property type="evidence" value="ECO:0007669"/>
    <property type="project" value="UniProtKB-SubCell"/>
</dbReference>
<dbReference type="GO" id="GO:0043772">
    <property type="term" value="F:acyl-phosphate glycerol-3-phosphate acyltransferase activity"/>
    <property type="evidence" value="ECO:0007669"/>
    <property type="project" value="UniProtKB-UniRule"/>
</dbReference>
<dbReference type="GO" id="GO:0008654">
    <property type="term" value="P:phospholipid biosynthetic process"/>
    <property type="evidence" value="ECO:0007669"/>
    <property type="project" value="UniProtKB-UniRule"/>
</dbReference>
<dbReference type="HAMAP" id="MF_01043">
    <property type="entry name" value="PlsY"/>
    <property type="match status" value="1"/>
</dbReference>
<dbReference type="InterPro" id="IPR003811">
    <property type="entry name" value="G3P_acylTferase_PlsY"/>
</dbReference>
<dbReference type="NCBIfam" id="TIGR00023">
    <property type="entry name" value="glycerol-3-phosphate 1-O-acyltransferase PlsY"/>
    <property type="match status" value="1"/>
</dbReference>
<dbReference type="PANTHER" id="PTHR30309:SF0">
    <property type="entry name" value="GLYCEROL-3-PHOSPHATE ACYLTRANSFERASE-RELATED"/>
    <property type="match status" value="1"/>
</dbReference>
<dbReference type="PANTHER" id="PTHR30309">
    <property type="entry name" value="INNER MEMBRANE PROTEIN YGIH"/>
    <property type="match status" value="1"/>
</dbReference>
<dbReference type="Pfam" id="PF02660">
    <property type="entry name" value="G3P_acyltransf"/>
    <property type="match status" value="1"/>
</dbReference>
<dbReference type="SMART" id="SM01207">
    <property type="entry name" value="G3P_acyltransf"/>
    <property type="match status" value="1"/>
</dbReference>
<proteinExistence type="inferred from homology"/>
<evidence type="ECO:0000255" key="1">
    <source>
        <dbReference type="HAMAP-Rule" id="MF_01043"/>
    </source>
</evidence>
<gene>
    <name evidence="1" type="primary">plsY</name>
</gene>
<accession>Q8L3A1</accession>
<name>PLSY_ACHLA</name>
<keyword id="KW-1003">Cell membrane</keyword>
<keyword id="KW-0444">Lipid biosynthesis</keyword>
<keyword id="KW-0443">Lipid metabolism</keyword>
<keyword id="KW-0472">Membrane</keyword>
<keyword id="KW-0594">Phospholipid biosynthesis</keyword>
<keyword id="KW-1208">Phospholipid metabolism</keyword>
<keyword id="KW-0808">Transferase</keyword>
<keyword id="KW-0812">Transmembrane</keyword>
<keyword id="KW-1133">Transmembrane helix</keyword>
<protein>
    <recommendedName>
        <fullName evidence="1">Glycerol-3-phosphate acyltransferase</fullName>
    </recommendedName>
    <alternativeName>
        <fullName evidence="1">Acyl-PO4 G3P acyltransferase</fullName>
    </alternativeName>
    <alternativeName>
        <fullName evidence="1">Acyl-phosphate--glycerol-3-phosphate acyltransferase</fullName>
    </alternativeName>
    <alternativeName>
        <fullName evidence="1">G3P acyltransferase</fullName>
        <shortName evidence="1">GPAT</shortName>
        <ecNumber evidence="1">2.3.1.275</ecNumber>
    </alternativeName>
    <alternativeName>
        <fullName evidence="1">Lysophosphatidic acid synthase</fullName>
        <shortName evidence="1">LPA synthase</shortName>
    </alternativeName>
</protein>